<keyword id="KW-0343">GTPase activation</keyword>
<keyword id="KW-1017">Isopeptide bond</keyword>
<keyword id="KW-0597">Phosphoprotein</keyword>
<keyword id="KW-1185">Reference proteome</keyword>
<keyword id="KW-0832">Ubl conjugation</keyword>
<gene>
    <name type="primary">BEM2</name>
    <name type="synonym">IPL2</name>
    <name type="synonym">SUP9</name>
    <name type="ordered locus">YER155C</name>
</gene>
<sequence>MKGLLWSKNRKSSTASASSSSTSTSHKTTTASTASSSSPSSSSQTIRNSTSGASPYMHSHHHHGQGHSHHRGEDNNRDKRKSSVFPPSKQYTSTSSSQVNLGMYHSDTNTRSSRSIASTLKDDSPSVCSEDEISNSSSQKSNAQDETPIAYKKSAHSKDSLLPSRSSSLSPPQSRCSTGTTLEKSLNTSGISNSSGTNNNNSNNNNDNEQKQRNVIHLNSENYDTTVFKTGWVNKSHGQTVATNYNSSMTAPSSSSSSSSQNLRNDAYSRNRESRFYGNDGSSLKNDDSSSTTATNSGNDVASARSSMAIDPQMLVPDYRLYRAQLKGCVLNLYKSGLNSNIKFFDPTLPASNSSIANENHQQKKQQTNNQAQAEALHQKQSFGQMGEPITLDLKYLSEVYPHPDLRQDSDGKIISGTIESLCHTVLFYPGPKQSDVPNEKSLSKTHRAVINLLLMFPLLDHFIKFLKVFNQFGLSFTKNKSRLTNNSTQFYNISPAVDDSMTQRLALTAKTILDVFPGFLLDEPMLKTIISLLDTISLHNDEISNNLKIKIANKHNELMKLTAFTRSLPMATSSTHELEIILDPSHFLSLDITTLADEVHHINLKFDKVWAPKFDYSLLYDSKFINRRIVSLNPLVFNNDQNIHFLGRLLISHLFPTNPEFSKKVTPKVRAELLDKWVQIGCRFEHLGDMVSWLAVATIICSIPVLRSSSWKYVPDQSLKTIFKDWVPTIIQLERRQRTSKSTSSVFILAPPNLDDDFTRANVISYFGDLLIHADDLPSDTKFKYLEKKINRTKNAFHKWQQRLQAIDSTRHKTNSTENVRDNDSPNNVVYQLWKFHLSQPPLNIEGIMKLSVQHEPPIIDQKAYSTIGSQRSALVTGSYLPILFNELFPNYSLFPKNTLVGAASDAKLPPPRSSARLSKSLSISEPIPIASNSHTMGSLTDDAMSSKNDNNKVTGVGKIDGPVIKEMSSKQSNKQRLLKSVRDVFNIDMDVFHISDELVFKSVYDNDGKSRPASMVIETPKRFSQHSSMLINNPATPNQKMRDSLDTTGRLSKTLENMDFFNNIGQVSDSLKESIIRVVLKSSSLEKIFDLLVLTSNIFSKLVDTKDLENYYYHQRQRGHSTRGLSDDNIGLLDYAFVKLTMDNDIFTETFFNTYKSFTTTTTVLENMAKRYVGAKSCSVSISKILDRSDDSKMKINEDTNLVSSSLYDQNFPVWDMKVTDDENINLIYMAKIQIGAAEAILHLVKNHYSDFTDDLCNNSTLLDIIKIMEQEVSTEWPTRIANSKLQKSLPENFVIETENLLTTLTDLFHGIKSAYQKQLYRPIGVNRTQKRITDILNSFNTFSFTDLNNIIDDPSFSDDMIRSFQKLHSTNYEDILEWIYQLDNFISKKFNLVSKKDWIVLFQELELLSKESLVSFFNYPLHFKSSKLINPGYLQLHEFEISNLFTWISTLILKDDNGTESLFFEKLPQSIKLLIKLHTSLTTFFVMEISNVNKSSSERLTTCKVILQILNYIRWKNGSLDLFDSEEDESPHAICPHIPAFIETAIAHAIISPESRNYELSWIKASEKLSDPTKGTQNLRSISNVLEKIDDIHIKRFIEIDDVFSKNCKNLCPCPGWFISRLLEISQFVPNMSITNSKLINFDKRRFVNNIISNVLDLIPNEREFPLDIEMSDENPSKRTTFGRILFNNFEDVNKVYRKKTKKVSESEAISERFQEQGVFNEILVNEIEKIKREARKLEVLLDQEKILKNSAALHQAVPKKNRKSVIISGTHSDNDHSYNINKNTGQTPSLGSVMESNNSARNRRDSRASFSTNRSSVVSNSSHNGVSKKIGGFFRRPFSIGGFNTSSSNYSLNSILSQEVSSNKSILPSILPEVDSMQLHDLKPSYSLKTFEIKSIMEIINHRNIPAYYYAFKIVMQNGHEYLIQTASSSDLTEWIKMIKASKRFSFHSKKYKGKTHNKIFGVPLEDVCERENTLIPTIVVKLLEEIELRGLDEVGLYRIPGSIGSINALKNAFDEEGATDNSFTLEDDRWFEVNAIAGCFKMYLRELPDSLFSHAMVNDFTDLAIKYKAHAMVNEEYKRMMNELLQKLPTCYYQTLKRIVFHLNKVHQHVVNNKMDASNLAIVFSMSFINQEDLANSMGSRLGAVQTILQDFIKNPNDYFKQ</sequence>
<protein>
    <recommendedName>
        <fullName>GTPase-activating protein BEM2/IPL2</fullName>
    </recommendedName>
    <alternativeName>
        <fullName>Bud emergence protein 2</fullName>
    </alternativeName>
</protein>
<evidence type="ECO:0000255" key="1">
    <source>
        <dbReference type="PROSITE-ProRule" id="PRU00145"/>
    </source>
</evidence>
<evidence type="ECO:0000255" key="2">
    <source>
        <dbReference type="PROSITE-ProRule" id="PRU00168"/>
    </source>
</evidence>
<evidence type="ECO:0000255" key="3">
    <source>
        <dbReference type="PROSITE-ProRule" id="PRU00172"/>
    </source>
</evidence>
<evidence type="ECO:0000256" key="4">
    <source>
        <dbReference type="SAM" id="MobiDB-lite"/>
    </source>
</evidence>
<evidence type="ECO:0000269" key="5">
    <source>
    </source>
</evidence>
<evidence type="ECO:0007744" key="6">
    <source>
    </source>
</evidence>
<evidence type="ECO:0007744" key="7">
    <source>
    </source>
</evidence>
<evidence type="ECO:0007744" key="8">
    <source>
    </source>
</evidence>
<evidence type="ECO:0007744" key="9">
    <source>
    </source>
</evidence>
<evidence type="ECO:0007744" key="10">
    <source>
    </source>
</evidence>
<dbReference type="EMBL" id="Z35159">
    <property type="protein sequence ID" value="CAA84524.1"/>
    <property type="molecule type" value="Genomic_DNA"/>
</dbReference>
<dbReference type="EMBL" id="L33832">
    <property type="protein sequence ID" value="AAA57132.1"/>
    <property type="molecule type" value="Genomic_DNA"/>
</dbReference>
<dbReference type="EMBL" id="U18917">
    <property type="protein sequence ID" value="AAB64682.1"/>
    <property type="molecule type" value="Genomic_DNA"/>
</dbReference>
<dbReference type="EMBL" id="BK006939">
    <property type="protein sequence ID" value="DAA07816.1"/>
    <property type="molecule type" value="Genomic_DNA"/>
</dbReference>
<dbReference type="PIR" id="S50658">
    <property type="entry name" value="S50658"/>
</dbReference>
<dbReference type="RefSeq" id="NP_011082.3">
    <property type="nucleotide sequence ID" value="NM_001179045.3"/>
</dbReference>
<dbReference type="SMR" id="P39960"/>
<dbReference type="BioGRID" id="36905">
    <property type="interactions" value="600"/>
</dbReference>
<dbReference type="DIP" id="DIP-6580N"/>
<dbReference type="FunCoup" id="P39960">
    <property type="interactions" value="783"/>
</dbReference>
<dbReference type="IntAct" id="P39960">
    <property type="interactions" value="56"/>
</dbReference>
<dbReference type="MINT" id="P39960"/>
<dbReference type="STRING" id="4932.YER155C"/>
<dbReference type="GlyGen" id="P39960">
    <property type="glycosylation" value="2 sites, 1 O-linked glycan (2 sites)"/>
</dbReference>
<dbReference type="iPTMnet" id="P39960"/>
<dbReference type="PaxDb" id="4932-YER155C"/>
<dbReference type="PeptideAtlas" id="P39960"/>
<dbReference type="EnsemblFungi" id="YER155C_mRNA">
    <property type="protein sequence ID" value="YER155C"/>
    <property type="gene ID" value="YER155C"/>
</dbReference>
<dbReference type="GeneID" id="856899"/>
<dbReference type="KEGG" id="sce:YER155C"/>
<dbReference type="AGR" id="SGD:S000000957"/>
<dbReference type="SGD" id="S000000957">
    <property type="gene designation" value="BEM2"/>
</dbReference>
<dbReference type="VEuPathDB" id="FungiDB:YER155C"/>
<dbReference type="eggNOG" id="KOG1450">
    <property type="taxonomic scope" value="Eukaryota"/>
</dbReference>
<dbReference type="GeneTree" id="ENSGT01030000234635"/>
<dbReference type="HOGENOM" id="CLU_002085_0_0_1"/>
<dbReference type="InParanoid" id="P39960"/>
<dbReference type="OMA" id="TLEDDRW"/>
<dbReference type="OrthoDB" id="79452at2759"/>
<dbReference type="BioCyc" id="YEAST:G3O-30316-MONOMER"/>
<dbReference type="Reactome" id="R-SCE-9013148">
    <property type="pathway name" value="CDC42 GTPase cycle"/>
</dbReference>
<dbReference type="Reactome" id="R-SCE-9013405">
    <property type="pathway name" value="RHOD GTPase cycle"/>
</dbReference>
<dbReference type="Reactome" id="R-SCE-9013424">
    <property type="pathway name" value="RHOV GTPase cycle"/>
</dbReference>
<dbReference type="Reactome" id="R-SCE-9035034">
    <property type="pathway name" value="RHOF GTPase cycle"/>
</dbReference>
<dbReference type="BioGRID-ORCS" id="856899">
    <property type="hits" value="0 hits in 10 CRISPR screens"/>
</dbReference>
<dbReference type="CD-CODE" id="E03F929F">
    <property type="entry name" value="Stress granule"/>
</dbReference>
<dbReference type="PRO" id="PR:P39960"/>
<dbReference type="Proteomes" id="UP000002311">
    <property type="component" value="Chromosome V"/>
</dbReference>
<dbReference type="RNAct" id="P39960">
    <property type="molecule type" value="protein"/>
</dbReference>
<dbReference type="GO" id="GO:0005938">
    <property type="term" value="C:cell cortex"/>
    <property type="evidence" value="ECO:0000314"/>
    <property type="project" value="SGD"/>
</dbReference>
<dbReference type="GO" id="GO:0032153">
    <property type="term" value="C:cell division site"/>
    <property type="evidence" value="ECO:0000318"/>
    <property type="project" value="GO_Central"/>
</dbReference>
<dbReference type="GO" id="GO:0051286">
    <property type="term" value="C:cell tip"/>
    <property type="evidence" value="ECO:0000318"/>
    <property type="project" value="GO_Central"/>
</dbReference>
<dbReference type="GO" id="GO:0005934">
    <property type="term" value="C:cellular bud tip"/>
    <property type="evidence" value="ECO:0000314"/>
    <property type="project" value="SGD"/>
</dbReference>
<dbReference type="GO" id="GO:0005737">
    <property type="term" value="C:cytoplasm"/>
    <property type="evidence" value="ECO:0000314"/>
    <property type="project" value="SGD"/>
</dbReference>
<dbReference type="GO" id="GO:0000131">
    <property type="term" value="C:incipient cellular bud site"/>
    <property type="evidence" value="ECO:0000314"/>
    <property type="project" value="SGD"/>
</dbReference>
<dbReference type="GO" id="GO:0043332">
    <property type="term" value="C:mating projection tip"/>
    <property type="evidence" value="ECO:0000314"/>
    <property type="project" value="SGD"/>
</dbReference>
<dbReference type="GO" id="GO:0005739">
    <property type="term" value="C:mitochondrion"/>
    <property type="evidence" value="ECO:0007005"/>
    <property type="project" value="SGD"/>
</dbReference>
<dbReference type="GO" id="GO:0005886">
    <property type="term" value="C:plasma membrane"/>
    <property type="evidence" value="ECO:0000314"/>
    <property type="project" value="SGD"/>
</dbReference>
<dbReference type="GO" id="GO:0005628">
    <property type="term" value="C:prospore membrane"/>
    <property type="evidence" value="ECO:0007005"/>
    <property type="project" value="SGD"/>
</dbReference>
<dbReference type="GO" id="GO:0030427">
    <property type="term" value="C:site of polarized growth"/>
    <property type="evidence" value="ECO:0000318"/>
    <property type="project" value="GO_Central"/>
</dbReference>
<dbReference type="GO" id="GO:0005096">
    <property type="term" value="F:GTPase activator activity"/>
    <property type="evidence" value="ECO:0000314"/>
    <property type="project" value="SGD"/>
</dbReference>
<dbReference type="GO" id="GO:0005085">
    <property type="term" value="F:guanyl-nucleotide exchange factor activity"/>
    <property type="evidence" value="ECO:0007669"/>
    <property type="project" value="InterPro"/>
</dbReference>
<dbReference type="GO" id="GO:0003729">
    <property type="term" value="F:mRNA binding"/>
    <property type="evidence" value="ECO:0007005"/>
    <property type="project" value="SGD"/>
</dbReference>
<dbReference type="GO" id="GO:0030036">
    <property type="term" value="P:actin cytoskeleton organization"/>
    <property type="evidence" value="ECO:0000315"/>
    <property type="project" value="SGD"/>
</dbReference>
<dbReference type="GO" id="GO:0044879">
    <property type="term" value="P:mitotic morphogenesis checkpoint signaling"/>
    <property type="evidence" value="ECO:0000315"/>
    <property type="project" value="SGD"/>
</dbReference>
<dbReference type="GO" id="GO:0035024">
    <property type="term" value="P:negative regulation of Rho protein signal transduction"/>
    <property type="evidence" value="ECO:0000315"/>
    <property type="project" value="SGD"/>
</dbReference>
<dbReference type="GO" id="GO:0007264">
    <property type="term" value="P:small GTPase-mediated signal transduction"/>
    <property type="evidence" value="ECO:0000318"/>
    <property type="project" value="GO_Central"/>
</dbReference>
<dbReference type="CDD" id="cd00155">
    <property type="entry name" value="RasGEF"/>
    <property type="match status" value="1"/>
</dbReference>
<dbReference type="CDD" id="cd06224">
    <property type="entry name" value="REM"/>
    <property type="match status" value="1"/>
</dbReference>
<dbReference type="CDD" id="cd00159">
    <property type="entry name" value="RhoGAP"/>
    <property type="match status" value="1"/>
</dbReference>
<dbReference type="FunFam" id="1.10.555.10:FF:000075">
    <property type="entry name" value="Rho GTPase-activating protein"/>
    <property type="match status" value="1"/>
</dbReference>
<dbReference type="FunFam" id="1.10.840.10:FF:000023">
    <property type="entry name" value="Rho GTPase-activating protein"/>
    <property type="match status" value="1"/>
</dbReference>
<dbReference type="FunFam" id="1.20.870.10:FF:000022">
    <property type="entry name" value="Rho GTPase-activating protein"/>
    <property type="match status" value="1"/>
</dbReference>
<dbReference type="Gene3D" id="2.30.29.30">
    <property type="entry name" value="Pleckstrin-homology domain (PH domain)/Phosphotyrosine-binding domain (PTB)"/>
    <property type="match status" value="1"/>
</dbReference>
<dbReference type="Gene3D" id="1.10.840.10">
    <property type="entry name" value="Ras guanine-nucleotide exchange factors catalytic domain"/>
    <property type="match status" value="1"/>
</dbReference>
<dbReference type="Gene3D" id="1.10.555.10">
    <property type="entry name" value="Rho GTPase activation protein"/>
    <property type="match status" value="1"/>
</dbReference>
<dbReference type="Gene3D" id="1.20.870.10">
    <property type="entry name" value="Son of sevenless (SoS) protein Chain: S domain 1"/>
    <property type="match status" value="1"/>
</dbReference>
<dbReference type="InterPro" id="IPR011993">
    <property type="entry name" value="PH-like_dom_sf"/>
</dbReference>
<dbReference type="InterPro" id="IPR001849">
    <property type="entry name" value="PH_domain"/>
</dbReference>
<dbReference type="InterPro" id="IPR000651">
    <property type="entry name" value="Ras-like_Gua-exchang_fac_N"/>
</dbReference>
<dbReference type="InterPro" id="IPR023578">
    <property type="entry name" value="Ras_GEF_dom_sf"/>
</dbReference>
<dbReference type="InterPro" id="IPR001895">
    <property type="entry name" value="RASGEF_cat_dom"/>
</dbReference>
<dbReference type="InterPro" id="IPR036964">
    <property type="entry name" value="RASGEF_cat_dom_sf"/>
</dbReference>
<dbReference type="InterPro" id="IPR050729">
    <property type="entry name" value="Rho-GAP"/>
</dbReference>
<dbReference type="InterPro" id="IPR008936">
    <property type="entry name" value="Rho_GTPase_activation_prot"/>
</dbReference>
<dbReference type="InterPro" id="IPR000198">
    <property type="entry name" value="RhoGAP_dom"/>
</dbReference>
<dbReference type="PANTHER" id="PTHR23176:SF96">
    <property type="entry name" value="GTPASE-ACTIVATING PROTEIN BEM2_IPL2"/>
    <property type="match status" value="1"/>
</dbReference>
<dbReference type="PANTHER" id="PTHR23176">
    <property type="entry name" value="RHO/RAC/CDC GTPASE-ACTIVATING PROTEIN"/>
    <property type="match status" value="1"/>
</dbReference>
<dbReference type="Pfam" id="PF00169">
    <property type="entry name" value="PH"/>
    <property type="match status" value="1"/>
</dbReference>
<dbReference type="Pfam" id="PF00617">
    <property type="entry name" value="RasGEF"/>
    <property type="match status" value="1"/>
</dbReference>
<dbReference type="Pfam" id="PF00618">
    <property type="entry name" value="RasGEF_N"/>
    <property type="match status" value="1"/>
</dbReference>
<dbReference type="Pfam" id="PF00620">
    <property type="entry name" value="RhoGAP"/>
    <property type="match status" value="1"/>
</dbReference>
<dbReference type="SMART" id="SM00147">
    <property type="entry name" value="RasGEF"/>
    <property type="match status" value="1"/>
</dbReference>
<dbReference type="SMART" id="SM00229">
    <property type="entry name" value="RasGEFN"/>
    <property type="match status" value="1"/>
</dbReference>
<dbReference type="SMART" id="SM00324">
    <property type="entry name" value="RhoGAP"/>
    <property type="match status" value="1"/>
</dbReference>
<dbReference type="SUPFAM" id="SSF48350">
    <property type="entry name" value="GTPase activation domain, GAP"/>
    <property type="match status" value="1"/>
</dbReference>
<dbReference type="SUPFAM" id="SSF50729">
    <property type="entry name" value="PH domain-like"/>
    <property type="match status" value="1"/>
</dbReference>
<dbReference type="SUPFAM" id="SSF48366">
    <property type="entry name" value="Ras GEF"/>
    <property type="match status" value="2"/>
</dbReference>
<dbReference type="PROSITE" id="PS50003">
    <property type="entry name" value="PH_DOMAIN"/>
    <property type="match status" value="1"/>
</dbReference>
<dbReference type="PROSITE" id="PS50009">
    <property type="entry name" value="RASGEF_CAT"/>
    <property type="match status" value="1"/>
</dbReference>
<dbReference type="PROSITE" id="PS50238">
    <property type="entry name" value="RHOGAP"/>
    <property type="match status" value="1"/>
</dbReference>
<name>BEM2_YEAST</name>
<organism>
    <name type="scientific">Saccharomyces cerevisiae (strain ATCC 204508 / S288c)</name>
    <name type="common">Baker's yeast</name>
    <dbReference type="NCBI Taxonomy" id="559292"/>
    <lineage>
        <taxon>Eukaryota</taxon>
        <taxon>Fungi</taxon>
        <taxon>Dikarya</taxon>
        <taxon>Ascomycota</taxon>
        <taxon>Saccharomycotina</taxon>
        <taxon>Saccharomycetes</taxon>
        <taxon>Saccharomycetales</taxon>
        <taxon>Saccharomycetaceae</taxon>
        <taxon>Saccharomyces</taxon>
    </lineage>
</organism>
<comment type="function">
    <text>GTPase-activating protein (GAP) for RHO1 and RHO2. Involved in the control of cellular morphogenesis. Required for proper bud site selection and bud emergence.</text>
</comment>
<comment type="interaction">
    <interactant intactId="EBI-3517">
        <id>P39960</id>
    </interactant>
    <interactant intactId="EBI-20747">
        <id>P27637</id>
        <label>BUD14</label>
    </interactant>
    <organismsDiffer>false</organismsDiffer>
    <experiments>4</experiments>
</comment>
<comment type="miscellaneous">
    <text evidence="5">Present with 1230 molecules/cell in log phase SD medium.</text>
</comment>
<feature type="chain" id="PRO_0000068858" description="GTPase-activating protein BEM2/IPL2">
    <location>
        <begin position="1"/>
        <end position="2167"/>
    </location>
</feature>
<feature type="domain" description="Ras-GEF" evidence="2">
    <location>
        <begin position="592"/>
        <end position="859"/>
    </location>
</feature>
<feature type="domain" description="PH" evidence="1">
    <location>
        <begin position="1846"/>
        <end position="1948"/>
    </location>
</feature>
<feature type="domain" description="Rho-GAP" evidence="3">
    <location>
        <begin position="1967"/>
        <end position="2165"/>
    </location>
</feature>
<feature type="region of interest" description="Disordered" evidence="4">
    <location>
        <begin position="1"/>
        <end position="209"/>
    </location>
</feature>
<feature type="region of interest" description="Disordered" evidence="4">
    <location>
        <begin position="243"/>
        <end position="305"/>
    </location>
</feature>
<feature type="region of interest" description="Disordered" evidence="4">
    <location>
        <begin position="353"/>
        <end position="372"/>
    </location>
</feature>
<feature type="region of interest" description="Disordered" evidence="4">
    <location>
        <begin position="1771"/>
        <end position="1828"/>
    </location>
</feature>
<feature type="compositionally biased region" description="Low complexity" evidence="4">
    <location>
        <begin position="12"/>
        <end position="51"/>
    </location>
</feature>
<feature type="compositionally biased region" description="Basic residues" evidence="4">
    <location>
        <begin position="58"/>
        <end position="70"/>
    </location>
</feature>
<feature type="compositionally biased region" description="Polar residues" evidence="4">
    <location>
        <begin position="89"/>
        <end position="118"/>
    </location>
</feature>
<feature type="compositionally biased region" description="Polar residues" evidence="4">
    <location>
        <begin position="134"/>
        <end position="145"/>
    </location>
</feature>
<feature type="compositionally biased region" description="Low complexity" evidence="4">
    <location>
        <begin position="160"/>
        <end position="177"/>
    </location>
</feature>
<feature type="compositionally biased region" description="Low complexity" evidence="4">
    <location>
        <begin position="187"/>
        <end position="207"/>
    </location>
</feature>
<feature type="compositionally biased region" description="Polar residues" evidence="4">
    <location>
        <begin position="243"/>
        <end position="252"/>
    </location>
</feature>
<feature type="compositionally biased region" description="Low complexity" evidence="4">
    <location>
        <begin position="289"/>
        <end position="300"/>
    </location>
</feature>
<feature type="compositionally biased region" description="Polar residues" evidence="4">
    <location>
        <begin position="1771"/>
        <end position="1794"/>
    </location>
</feature>
<feature type="compositionally biased region" description="Low complexity" evidence="4">
    <location>
        <begin position="1812"/>
        <end position="1828"/>
    </location>
</feature>
<feature type="site" description="Arginine finger; crucial for GTP hydrolysis by stabilizing the transition state" evidence="3">
    <location>
        <position position="2003"/>
    </location>
</feature>
<feature type="modified residue" description="Phosphoserine" evidence="8 9">
    <location>
        <position position="129"/>
    </location>
</feature>
<feature type="modified residue" description="Phosphoserine" evidence="8 9">
    <location>
        <position position="283"/>
    </location>
</feature>
<feature type="modified residue" description="Phosphoserine" evidence="6 7">
    <location>
        <position position="1012"/>
    </location>
</feature>
<feature type="modified residue" description="Phosphoserine" evidence="7">
    <location>
        <position position="1016"/>
    </location>
</feature>
<feature type="modified residue" description="Phosphothreonine" evidence="9">
    <location>
        <position position="1038"/>
    </location>
</feature>
<feature type="modified residue" description="Phosphoserine" evidence="6 7">
    <location>
        <position position="1046"/>
    </location>
</feature>
<feature type="modified residue" description="Phosphoserine" evidence="6">
    <location>
        <position position="1054"/>
    </location>
</feature>
<feature type="modified residue" description="Phosphoserine" evidence="9">
    <location>
        <position position="1128"/>
    </location>
</feature>
<feature type="cross-link" description="Glycyl lysine isopeptide (Lys-Gly) (interchain with G-Cter in ubiquitin)" evidence="10">
    <location>
        <position position="27"/>
    </location>
</feature>
<reference key="1">
    <citation type="journal article" date="1994" name="J. Cell Biol.">
        <title>Control of cellular morphogenesis by the Ip12/Bem2 GTPase-activating protein: possible role of protein phosphorylation.</title>
        <authorList>
            <person name="Kim Y."/>
            <person name="Francisco L."/>
            <person name="Chen G."/>
            <person name="Marcotte E."/>
            <person name="Chan C.S."/>
        </authorList>
    </citation>
    <scope>NUCLEOTIDE SEQUENCE [GENOMIC DNA]</scope>
    <source>
        <strain>ATCC 204508 / S288c</strain>
    </source>
</reference>
<reference key="2">
    <citation type="journal article" date="1994" name="J. Cell Biol.">
        <title>Interactions between the bud emergence proteins Bem1p and Bem2p and Rho-type GTPases in yeast.</title>
        <authorList>
            <person name="Peterson J."/>
            <person name="Zheng Y."/>
            <person name="Bender L."/>
            <person name="Myers A."/>
            <person name="Cerione R."/>
            <person name="Bender A."/>
        </authorList>
    </citation>
    <scope>NUCLEOTIDE SEQUENCE [GENOMIC DNA]</scope>
</reference>
<reference key="3">
    <citation type="journal article" date="1997" name="Nature">
        <title>The nucleotide sequence of Saccharomyces cerevisiae chromosome V.</title>
        <authorList>
            <person name="Dietrich F.S."/>
            <person name="Mulligan J.T."/>
            <person name="Hennessy K.M."/>
            <person name="Yelton M.A."/>
            <person name="Allen E."/>
            <person name="Araujo R."/>
            <person name="Aviles E."/>
            <person name="Berno A."/>
            <person name="Brennan T."/>
            <person name="Carpenter J."/>
            <person name="Chen E."/>
            <person name="Cherry J.M."/>
            <person name="Chung E."/>
            <person name="Duncan M."/>
            <person name="Guzman E."/>
            <person name="Hartzell G."/>
            <person name="Hunicke-Smith S."/>
            <person name="Hyman R.W."/>
            <person name="Kayser A."/>
            <person name="Komp C."/>
            <person name="Lashkari D."/>
            <person name="Lew H."/>
            <person name="Lin D."/>
            <person name="Mosedale D."/>
            <person name="Nakahara K."/>
            <person name="Namath A."/>
            <person name="Norgren R."/>
            <person name="Oefner P."/>
            <person name="Oh C."/>
            <person name="Petel F.X."/>
            <person name="Roberts D."/>
            <person name="Sehl P."/>
            <person name="Schramm S."/>
            <person name="Shogren T."/>
            <person name="Smith V."/>
            <person name="Taylor P."/>
            <person name="Wei Y."/>
            <person name="Botstein D."/>
            <person name="Davis R.W."/>
        </authorList>
    </citation>
    <scope>NUCLEOTIDE SEQUENCE [LARGE SCALE GENOMIC DNA]</scope>
    <source>
        <strain>ATCC 204508 / S288c</strain>
    </source>
</reference>
<reference key="4">
    <citation type="journal article" date="2014" name="G3 (Bethesda)">
        <title>The reference genome sequence of Saccharomyces cerevisiae: Then and now.</title>
        <authorList>
            <person name="Engel S.R."/>
            <person name="Dietrich F.S."/>
            <person name="Fisk D.G."/>
            <person name="Binkley G."/>
            <person name="Balakrishnan R."/>
            <person name="Costanzo M.C."/>
            <person name="Dwight S.S."/>
            <person name="Hitz B.C."/>
            <person name="Karra K."/>
            <person name="Nash R.S."/>
            <person name="Weng S."/>
            <person name="Wong E.D."/>
            <person name="Lloyd P."/>
            <person name="Skrzypek M.S."/>
            <person name="Miyasato S.R."/>
            <person name="Simison M."/>
            <person name="Cherry J.M."/>
        </authorList>
    </citation>
    <scope>GENOME REANNOTATION</scope>
    <source>
        <strain>ATCC 204508 / S288c</strain>
    </source>
</reference>
<reference key="5">
    <citation type="journal article" date="1993" name="Genetics">
        <title>Isolation and characterization of chromosome-gain and increase-in-ploidy mutants in yeast.</title>
        <authorList>
            <person name="Chan C.S."/>
            <person name="Botstein D."/>
        </authorList>
    </citation>
    <scope>CHARACTERIZATION</scope>
</reference>
<reference key="6">
    <citation type="journal article" date="2003" name="Nature">
        <title>Global analysis of protein expression in yeast.</title>
        <authorList>
            <person name="Ghaemmaghami S."/>
            <person name="Huh W.-K."/>
            <person name="Bower K."/>
            <person name="Howson R.W."/>
            <person name="Belle A."/>
            <person name="Dephoure N."/>
            <person name="O'Shea E.K."/>
            <person name="Weissman J.S."/>
        </authorList>
    </citation>
    <scope>LEVEL OF PROTEIN EXPRESSION [LARGE SCALE ANALYSIS]</scope>
</reference>
<reference key="7">
    <citation type="journal article" date="2007" name="J. Proteome Res.">
        <title>Large-scale phosphorylation analysis of alpha-factor-arrested Saccharomyces cerevisiae.</title>
        <authorList>
            <person name="Li X."/>
            <person name="Gerber S.A."/>
            <person name="Rudner A.D."/>
            <person name="Beausoleil S.A."/>
            <person name="Haas W."/>
            <person name="Villen J."/>
            <person name="Elias J.E."/>
            <person name="Gygi S.P."/>
        </authorList>
    </citation>
    <scope>PHOSPHORYLATION [LARGE SCALE ANALYSIS] AT SER-1012; SER-1016 AND SER-1046</scope>
    <scope>IDENTIFICATION BY MASS SPECTROMETRY [LARGE SCALE ANALYSIS]</scope>
    <source>
        <strain>ADR376</strain>
    </source>
</reference>
<reference key="8">
    <citation type="journal article" date="2007" name="Proc. Natl. Acad. Sci. U.S.A.">
        <title>Analysis of phosphorylation sites on proteins from Saccharomyces cerevisiae by electron transfer dissociation (ETD) mass spectrometry.</title>
        <authorList>
            <person name="Chi A."/>
            <person name="Huttenhower C."/>
            <person name="Geer L.Y."/>
            <person name="Coon J.J."/>
            <person name="Syka J.E.P."/>
            <person name="Bai D.L."/>
            <person name="Shabanowitz J."/>
            <person name="Burke D.J."/>
            <person name="Troyanskaya O.G."/>
            <person name="Hunt D.F."/>
        </authorList>
    </citation>
    <scope>PHOSPHORYLATION [LARGE SCALE ANALYSIS] AT SER-1012; SER-1046 AND SER-1054</scope>
    <scope>IDENTIFICATION BY MASS SPECTROMETRY [LARGE SCALE ANALYSIS]</scope>
</reference>
<reference key="9">
    <citation type="journal article" date="2008" name="Mol. Cell. Proteomics">
        <title>A multidimensional chromatography technology for in-depth phosphoproteome analysis.</title>
        <authorList>
            <person name="Albuquerque C.P."/>
            <person name="Smolka M.B."/>
            <person name="Payne S.H."/>
            <person name="Bafna V."/>
            <person name="Eng J."/>
            <person name="Zhou H."/>
        </authorList>
    </citation>
    <scope>PHOSPHORYLATION [LARGE SCALE ANALYSIS] AT SER-129 AND SER-283</scope>
    <scope>IDENTIFICATION BY MASS SPECTROMETRY [LARGE SCALE ANALYSIS]</scope>
</reference>
<reference key="10">
    <citation type="journal article" date="2009" name="Science">
        <title>Global analysis of Cdk1 substrate phosphorylation sites provides insights into evolution.</title>
        <authorList>
            <person name="Holt L.J."/>
            <person name="Tuch B.B."/>
            <person name="Villen J."/>
            <person name="Johnson A.D."/>
            <person name="Gygi S.P."/>
            <person name="Morgan D.O."/>
        </authorList>
    </citation>
    <scope>PHOSPHORYLATION [LARGE SCALE ANALYSIS] AT SER-129; SER-283; THR-1038 AND SER-1128</scope>
    <scope>IDENTIFICATION BY MASS SPECTROMETRY [LARGE SCALE ANALYSIS]</scope>
</reference>
<reference key="11">
    <citation type="journal article" date="2012" name="Proteomics">
        <title>Sites of ubiquitin attachment in Saccharomyces cerevisiae.</title>
        <authorList>
            <person name="Starita L.M."/>
            <person name="Lo R.S."/>
            <person name="Eng J.K."/>
            <person name="von Haller P.D."/>
            <person name="Fields S."/>
        </authorList>
    </citation>
    <scope>UBIQUITINATION [LARGE SCALE ANALYSIS] AT LYS-27</scope>
    <scope>IDENTIFICATION BY MASS SPECTROMETRY [LARGE SCALE ANALYSIS]</scope>
</reference>
<accession>P39960</accession>
<accession>D3DM62</accession>
<proteinExistence type="evidence at protein level"/>